<keyword id="KW-0067">ATP-binding</keyword>
<keyword id="KW-0963">Cytoplasm</keyword>
<keyword id="KW-0227">DNA damage</keyword>
<keyword id="KW-0233">DNA recombination</keyword>
<keyword id="KW-0234">DNA repair</keyword>
<keyword id="KW-0238">DNA-binding</keyword>
<keyword id="KW-0547">Nucleotide-binding</keyword>
<keyword id="KW-0742">SOS response</keyword>
<accession>A9VS23</accession>
<name>RECA_BACMK</name>
<reference key="1">
    <citation type="journal article" date="2008" name="Chem. Biol. Interact.">
        <title>Extending the Bacillus cereus group genomics to putative food-borne pathogens of different toxicity.</title>
        <authorList>
            <person name="Lapidus A."/>
            <person name="Goltsman E."/>
            <person name="Auger S."/>
            <person name="Galleron N."/>
            <person name="Segurens B."/>
            <person name="Dossat C."/>
            <person name="Land M.L."/>
            <person name="Broussolle V."/>
            <person name="Brillard J."/>
            <person name="Guinebretiere M.-H."/>
            <person name="Sanchis V."/>
            <person name="Nguen-the C."/>
            <person name="Lereclus D."/>
            <person name="Richardson P."/>
            <person name="Wincker P."/>
            <person name="Weissenbach J."/>
            <person name="Ehrlich S.D."/>
            <person name="Sorokin A."/>
        </authorList>
    </citation>
    <scope>NUCLEOTIDE SEQUENCE [LARGE SCALE GENOMIC DNA]</scope>
    <source>
        <strain>KBAB4</strain>
    </source>
</reference>
<comment type="function">
    <text evidence="1">Can catalyze the hydrolysis of ATP in the presence of single-stranded DNA, the ATP-dependent uptake of single-stranded DNA by duplex DNA, and the ATP-dependent hybridization of homologous single-stranded DNAs. It interacts with LexA causing its activation and leading to its autocatalytic cleavage.</text>
</comment>
<comment type="subcellular location">
    <subcellularLocation>
        <location evidence="1">Cytoplasm</location>
    </subcellularLocation>
</comment>
<comment type="similarity">
    <text evidence="1">Belongs to the RecA family.</text>
</comment>
<evidence type="ECO:0000255" key="1">
    <source>
        <dbReference type="HAMAP-Rule" id="MF_00268"/>
    </source>
</evidence>
<gene>
    <name evidence="1" type="primary">recA</name>
    <name type="ordered locus">BcerKBAB4_3550</name>
</gene>
<protein>
    <recommendedName>
        <fullName evidence="1">Protein RecA</fullName>
    </recommendedName>
    <alternativeName>
        <fullName evidence="1">Recombinase A</fullName>
    </alternativeName>
</protein>
<sequence length="343" mass="37384">MSDRQAALDMALKQIEKQFGKGSIMKLGEQAERRISTISSGSLALDVALGVGGYPRGRVIEIYGPESSGKTTVSLHAIAEVQRQGGQAAFIDAEHAMDPVYAQKLGVNIDELLLSQPDTGEQGLEIAEALVRSGAVDIIVIDSVAALVPKAEIEGDMGDSHVGLQARLMSQALRKLSGAINKSKTIAIFINQIREKVGVMFGNPETTPGGRALKFYSTVRLEVRRAEQLKQGNDIVGNKTKVKVVKNKVAPPFRVAEVDIMYGEGISREGEILDMASELDIVQKSGAWYSYNEERLGQGRENSKQFLKENTDLREEIAFFVREHHGIGENSGVEDTEDSTRQD</sequence>
<proteinExistence type="inferred from homology"/>
<dbReference type="EMBL" id="CP000903">
    <property type="protein sequence ID" value="ABY44723.1"/>
    <property type="molecule type" value="Genomic_DNA"/>
</dbReference>
<dbReference type="RefSeq" id="WP_002014599.1">
    <property type="nucleotide sequence ID" value="NZ_CAKMRX030000111.1"/>
</dbReference>
<dbReference type="SMR" id="A9VS23"/>
<dbReference type="GeneID" id="66266655"/>
<dbReference type="KEGG" id="bwe:BcerKBAB4_3550"/>
<dbReference type="eggNOG" id="COG0468">
    <property type="taxonomic scope" value="Bacteria"/>
</dbReference>
<dbReference type="HOGENOM" id="CLU_040469_1_2_9"/>
<dbReference type="Proteomes" id="UP000002154">
    <property type="component" value="Chromosome"/>
</dbReference>
<dbReference type="GO" id="GO:0005829">
    <property type="term" value="C:cytosol"/>
    <property type="evidence" value="ECO:0007669"/>
    <property type="project" value="TreeGrafter"/>
</dbReference>
<dbReference type="GO" id="GO:0005524">
    <property type="term" value="F:ATP binding"/>
    <property type="evidence" value="ECO:0007669"/>
    <property type="project" value="UniProtKB-UniRule"/>
</dbReference>
<dbReference type="GO" id="GO:0016887">
    <property type="term" value="F:ATP hydrolysis activity"/>
    <property type="evidence" value="ECO:0007669"/>
    <property type="project" value="InterPro"/>
</dbReference>
<dbReference type="GO" id="GO:0140664">
    <property type="term" value="F:ATP-dependent DNA damage sensor activity"/>
    <property type="evidence" value="ECO:0007669"/>
    <property type="project" value="InterPro"/>
</dbReference>
<dbReference type="GO" id="GO:0003684">
    <property type="term" value="F:damaged DNA binding"/>
    <property type="evidence" value="ECO:0007669"/>
    <property type="project" value="UniProtKB-UniRule"/>
</dbReference>
<dbReference type="GO" id="GO:0003697">
    <property type="term" value="F:single-stranded DNA binding"/>
    <property type="evidence" value="ECO:0007669"/>
    <property type="project" value="UniProtKB-UniRule"/>
</dbReference>
<dbReference type="GO" id="GO:0006310">
    <property type="term" value="P:DNA recombination"/>
    <property type="evidence" value="ECO:0007669"/>
    <property type="project" value="UniProtKB-UniRule"/>
</dbReference>
<dbReference type="GO" id="GO:0006281">
    <property type="term" value="P:DNA repair"/>
    <property type="evidence" value="ECO:0007669"/>
    <property type="project" value="UniProtKB-UniRule"/>
</dbReference>
<dbReference type="GO" id="GO:0009432">
    <property type="term" value="P:SOS response"/>
    <property type="evidence" value="ECO:0007669"/>
    <property type="project" value="UniProtKB-UniRule"/>
</dbReference>
<dbReference type="CDD" id="cd00983">
    <property type="entry name" value="RecA"/>
    <property type="match status" value="1"/>
</dbReference>
<dbReference type="FunFam" id="3.40.50.300:FF:000087">
    <property type="entry name" value="Recombinase RecA"/>
    <property type="match status" value="1"/>
</dbReference>
<dbReference type="Gene3D" id="3.40.50.300">
    <property type="entry name" value="P-loop containing nucleotide triphosphate hydrolases"/>
    <property type="match status" value="1"/>
</dbReference>
<dbReference type="HAMAP" id="MF_00268">
    <property type="entry name" value="RecA"/>
    <property type="match status" value="1"/>
</dbReference>
<dbReference type="InterPro" id="IPR003593">
    <property type="entry name" value="AAA+_ATPase"/>
</dbReference>
<dbReference type="InterPro" id="IPR013765">
    <property type="entry name" value="DNA_recomb/repair_RecA"/>
</dbReference>
<dbReference type="InterPro" id="IPR020584">
    <property type="entry name" value="DNA_recomb/repair_RecA_CS"/>
</dbReference>
<dbReference type="InterPro" id="IPR027417">
    <property type="entry name" value="P-loop_NTPase"/>
</dbReference>
<dbReference type="InterPro" id="IPR049261">
    <property type="entry name" value="RecA-like_C"/>
</dbReference>
<dbReference type="InterPro" id="IPR049428">
    <property type="entry name" value="RecA-like_N"/>
</dbReference>
<dbReference type="InterPro" id="IPR020588">
    <property type="entry name" value="RecA_ATP-bd"/>
</dbReference>
<dbReference type="InterPro" id="IPR023400">
    <property type="entry name" value="RecA_C_sf"/>
</dbReference>
<dbReference type="InterPro" id="IPR020587">
    <property type="entry name" value="RecA_monomer-monomer_interface"/>
</dbReference>
<dbReference type="NCBIfam" id="TIGR02012">
    <property type="entry name" value="tigrfam_recA"/>
    <property type="match status" value="1"/>
</dbReference>
<dbReference type="PANTHER" id="PTHR45900:SF1">
    <property type="entry name" value="MITOCHONDRIAL DNA REPAIR PROTEIN RECA HOMOLOG-RELATED"/>
    <property type="match status" value="1"/>
</dbReference>
<dbReference type="PANTHER" id="PTHR45900">
    <property type="entry name" value="RECA"/>
    <property type="match status" value="1"/>
</dbReference>
<dbReference type="Pfam" id="PF00154">
    <property type="entry name" value="RecA"/>
    <property type="match status" value="1"/>
</dbReference>
<dbReference type="Pfam" id="PF21096">
    <property type="entry name" value="RecA_C"/>
    <property type="match status" value="1"/>
</dbReference>
<dbReference type="PRINTS" id="PR00142">
    <property type="entry name" value="RECA"/>
</dbReference>
<dbReference type="SMART" id="SM00382">
    <property type="entry name" value="AAA"/>
    <property type="match status" value="1"/>
</dbReference>
<dbReference type="SUPFAM" id="SSF52540">
    <property type="entry name" value="P-loop containing nucleoside triphosphate hydrolases"/>
    <property type="match status" value="1"/>
</dbReference>
<dbReference type="SUPFAM" id="SSF54752">
    <property type="entry name" value="RecA protein, C-terminal domain"/>
    <property type="match status" value="1"/>
</dbReference>
<dbReference type="PROSITE" id="PS00321">
    <property type="entry name" value="RECA_1"/>
    <property type="match status" value="1"/>
</dbReference>
<dbReference type="PROSITE" id="PS50162">
    <property type="entry name" value="RECA_2"/>
    <property type="match status" value="1"/>
</dbReference>
<dbReference type="PROSITE" id="PS50163">
    <property type="entry name" value="RECA_3"/>
    <property type="match status" value="1"/>
</dbReference>
<organism>
    <name type="scientific">Bacillus mycoides (strain KBAB4)</name>
    <name type="common">Bacillus weihenstephanensis</name>
    <dbReference type="NCBI Taxonomy" id="315730"/>
    <lineage>
        <taxon>Bacteria</taxon>
        <taxon>Bacillati</taxon>
        <taxon>Bacillota</taxon>
        <taxon>Bacilli</taxon>
        <taxon>Bacillales</taxon>
        <taxon>Bacillaceae</taxon>
        <taxon>Bacillus</taxon>
        <taxon>Bacillus cereus group</taxon>
    </lineage>
</organism>
<feature type="chain" id="PRO_1000114313" description="Protein RecA">
    <location>
        <begin position="1"/>
        <end position="343"/>
    </location>
</feature>
<feature type="binding site" evidence="1">
    <location>
        <begin position="64"/>
        <end position="71"/>
    </location>
    <ligand>
        <name>ATP</name>
        <dbReference type="ChEBI" id="CHEBI:30616"/>
    </ligand>
</feature>